<dbReference type="EMBL" id="AY665230">
    <property type="protein sequence ID" value="AAV74268.1"/>
    <property type="molecule type" value="mRNA"/>
</dbReference>
<dbReference type="RefSeq" id="NP_001266921.1">
    <property type="nucleotide sequence ID" value="NM_001279992.1"/>
</dbReference>
<dbReference type="RefSeq" id="XP_010344496.2">
    <property type="nucleotide sequence ID" value="XM_010346194.2"/>
</dbReference>
<dbReference type="RefSeq" id="XP_039318681.1">
    <property type="nucleotide sequence ID" value="XM_039462747.1"/>
</dbReference>
<dbReference type="SMR" id="Q5IS98"/>
<dbReference type="GlyCosmos" id="Q5IS98">
    <property type="glycosylation" value="1 site, No reported glycans"/>
</dbReference>
<dbReference type="GeneID" id="101042089"/>
<dbReference type="CTD" id="1133"/>
<dbReference type="Proteomes" id="UP000233220">
    <property type="component" value="Whole Genome Shotgun Assembly"/>
</dbReference>
<dbReference type="GO" id="GO:0030425">
    <property type="term" value="C:dendrite"/>
    <property type="evidence" value="ECO:0007669"/>
    <property type="project" value="TreeGrafter"/>
</dbReference>
<dbReference type="GO" id="GO:0045211">
    <property type="term" value="C:postsynaptic membrane"/>
    <property type="evidence" value="ECO:0007669"/>
    <property type="project" value="UniProtKB-SubCell"/>
</dbReference>
<dbReference type="GO" id="GO:0016907">
    <property type="term" value="F:G protein-coupled acetylcholine receptor activity"/>
    <property type="evidence" value="ECO:0007669"/>
    <property type="project" value="InterPro"/>
</dbReference>
<dbReference type="GO" id="GO:0004993">
    <property type="term" value="F:G protein-coupled serotonin receptor activity"/>
    <property type="evidence" value="ECO:0007669"/>
    <property type="project" value="TreeGrafter"/>
</dbReference>
<dbReference type="GO" id="GO:0007197">
    <property type="term" value="P:adenylate cyclase-inhibiting G protein-coupled acetylcholine receptor signaling pathway"/>
    <property type="evidence" value="ECO:0007669"/>
    <property type="project" value="TreeGrafter"/>
</dbReference>
<dbReference type="GO" id="GO:0007187">
    <property type="term" value="P:G protein-coupled receptor signaling pathway, coupled to cyclic nucleotide second messenger"/>
    <property type="evidence" value="ECO:0007669"/>
    <property type="project" value="TreeGrafter"/>
</dbReference>
<dbReference type="GO" id="GO:0001696">
    <property type="term" value="P:gastric acid secretion"/>
    <property type="evidence" value="ECO:0007669"/>
    <property type="project" value="InterPro"/>
</dbReference>
<dbReference type="CDD" id="cd15300">
    <property type="entry name" value="7tmA_mAChR_M5"/>
    <property type="match status" value="1"/>
</dbReference>
<dbReference type="FunFam" id="1.20.1070.10:FF:000047">
    <property type="entry name" value="Muscarinic acetylcholine receptor"/>
    <property type="match status" value="1"/>
</dbReference>
<dbReference type="FunFam" id="1.20.1070.10:FF:000164">
    <property type="entry name" value="Muscarinic acetylcholine receptor"/>
    <property type="match status" value="1"/>
</dbReference>
<dbReference type="Gene3D" id="1.20.1070.10">
    <property type="entry name" value="Rhodopsin 7-helix transmembrane proteins"/>
    <property type="match status" value="2"/>
</dbReference>
<dbReference type="InterPro" id="IPR000276">
    <property type="entry name" value="GPCR_Rhodpsn"/>
</dbReference>
<dbReference type="InterPro" id="IPR017452">
    <property type="entry name" value="GPCR_Rhodpsn_7TM"/>
</dbReference>
<dbReference type="InterPro" id="IPR000502">
    <property type="entry name" value="Musac_Ach_M5_rcpt"/>
</dbReference>
<dbReference type="InterPro" id="IPR000995">
    <property type="entry name" value="Musac_Ach_rcpt"/>
</dbReference>
<dbReference type="PANTHER" id="PTHR24247">
    <property type="entry name" value="5-HYDROXYTRYPTAMINE RECEPTOR"/>
    <property type="match status" value="1"/>
</dbReference>
<dbReference type="PANTHER" id="PTHR24247:SF209">
    <property type="entry name" value="MUSCARINIC ACETYLCHOLINE RECEPTOR M5"/>
    <property type="match status" value="1"/>
</dbReference>
<dbReference type="Pfam" id="PF00001">
    <property type="entry name" value="7tm_1"/>
    <property type="match status" value="1"/>
</dbReference>
<dbReference type="PRINTS" id="PR00237">
    <property type="entry name" value="GPCRRHODOPSN"/>
</dbReference>
<dbReference type="PRINTS" id="PR00243">
    <property type="entry name" value="MUSCARINICR"/>
</dbReference>
<dbReference type="PRINTS" id="PR00542">
    <property type="entry name" value="MUSCRINICM5R"/>
</dbReference>
<dbReference type="SUPFAM" id="SSF81321">
    <property type="entry name" value="Family A G protein-coupled receptor-like"/>
    <property type="match status" value="1"/>
</dbReference>
<dbReference type="PROSITE" id="PS00237">
    <property type="entry name" value="G_PROTEIN_RECEP_F1_1"/>
    <property type="match status" value="1"/>
</dbReference>
<dbReference type="PROSITE" id="PS50262">
    <property type="entry name" value="G_PROTEIN_RECEP_F1_2"/>
    <property type="match status" value="1"/>
</dbReference>
<comment type="function">
    <text>The muscarinic acetylcholine receptor mediates various cellular responses, including inhibition of adenylate cyclase, breakdown of phosphoinositides and modulation of potassium channels through the action of G proteins. Primary transducing effect is Pi turnover.</text>
</comment>
<comment type="subcellular location">
    <subcellularLocation>
        <location>Cell membrane</location>
        <topology>Multi-pass membrane protein</topology>
    </subcellularLocation>
    <subcellularLocation>
        <location>Postsynaptic cell membrane</location>
        <topology>Multi-pass membrane protein</topology>
    </subcellularLocation>
</comment>
<comment type="similarity">
    <text evidence="3">Belongs to the G-protein coupled receptor 1 family. Muscarinic acetylcholine receptor subfamily. CHRM5 sub-subfamily.</text>
</comment>
<gene>
    <name type="primary">CHRM5</name>
</gene>
<name>ACM5_SAIBB</name>
<keyword id="KW-1003">Cell membrane</keyword>
<keyword id="KW-0297">G-protein coupled receptor</keyword>
<keyword id="KW-0325">Glycoprotein</keyword>
<keyword id="KW-0472">Membrane</keyword>
<keyword id="KW-0597">Phosphoprotein</keyword>
<keyword id="KW-0628">Postsynaptic cell membrane</keyword>
<keyword id="KW-0675">Receptor</keyword>
<keyword id="KW-1185">Reference proteome</keyword>
<keyword id="KW-0770">Synapse</keyword>
<keyword id="KW-0807">Transducer</keyword>
<keyword id="KW-0812">Transmembrane</keyword>
<keyword id="KW-1133">Transmembrane helix</keyword>
<reference key="1">
    <citation type="journal article" date="2004" name="Cell">
        <title>Accelerated evolution of nervous system genes in the origin of Homo sapiens.</title>
        <authorList>
            <person name="Dorus S."/>
            <person name="Vallender E.J."/>
            <person name="Evans P.D."/>
            <person name="Anderson J.R."/>
            <person name="Gilbert S.L."/>
            <person name="Mahowald M."/>
            <person name="Wyckoff G.J."/>
            <person name="Malcom C.M."/>
            <person name="Lahn B.T."/>
        </authorList>
    </citation>
    <scope>NUCLEOTIDE SEQUENCE [MRNA]</scope>
</reference>
<protein>
    <recommendedName>
        <fullName>Muscarinic acetylcholine receptor M5</fullName>
    </recommendedName>
</protein>
<proteinExistence type="evidence at transcript level"/>
<evidence type="ECO:0000250" key="1"/>
<evidence type="ECO:0000255" key="2"/>
<evidence type="ECO:0000255" key="3">
    <source>
        <dbReference type="PROSITE-ProRule" id="PRU00521"/>
    </source>
</evidence>
<evidence type="ECO:0000256" key="4">
    <source>
        <dbReference type="SAM" id="MobiDB-lite"/>
    </source>
</evidence>
<sequence length="532" mass="59873">MEGDSYGNATTINGTPVNHQPLERHRLWEVITIAAVTAVVSLITIVGNVLVMISFKVNSQLKTVNNYYLLSLACADLIIGIFSMNLYTTYILMGRWALGSLACDLWLALDYVASNASVMNLLVISFDRYFSITRPLTYRAKRTPKRAGIMIGLAWLISFILWAPAILCWQYLVGKRTVPPDECQIQFLSEPTITFGTAIAAFYIPVSVMTILYCRIYRETEKRTKDLADLQGSVSVTKAEKRKPAHRALFRSCFRCPRPTLVQRERNQASRSSSHRSTSITGKPSQATGPSTNWAKAEELTTCSSYPSSEDEDKPATDPVLQVVYKSQGKESPGEEFSAEEAEETFVKGQTDKNDCDSPDYFLSPAAAHRPKSQQCVAYKFQLVVKADGTQETNNGCHKVKIMPCSFPVAKEPSTKGLSPNLSHQMTKRKRMVLVKERKAAQTLSAILLAFIITWTPYNIMVLVSTFCDKCVPVALWHLGYWLCYVNSTVNPICYALCNRTFRKTFKMLLLCQWKKKKVEEKLYWQGNSKLP</sequence>
<accession>Q5IS98</accession>
<organism>
    <name type="scientific">Saimiri boliviensis boliviensis</name>
    <name type="common">Bolivian squirrel monkey</name>
    <dbReference type="NCBI Taxonomy" id="39432"/>
    <lineage>
        <taxon>Eukaryota</taxon>
        <taxon>Metazoa</taxon>
        <taxon>Chordata</taxon>
        <taxon>Craniata</taxon>
        <taxon>Vertebrata</taxon>
        <taxon>Euteleostomi</taxon>
        <taxon>Mammalia</taxon>
        <taxon>Eutheria</taxon>
        <taxon>Euarchontoglires</taxon>
        <taxon>Primates</taxon>
        <taxon>Haplorrhini</taxon>
        <taxon>Platyrrhini</taxon>
        <taxon>Cebidae</taxon>
        <taxon>Saimiriinae</taxon>
        <taxon>Saimiri</taxon>
    </lineage>
</organism>
<feature type="chain" id="PRO_0000069047" description="Muscarinic acetylcholine receptor M5">
    <location>
        <begin position="1"/>
        <end position="532"/>
    </location>
</feature>
<feature type="topological domain" description="Extracellular" evidence="1">
    <location>
        <begin position="1"/>
        <end position="29"/>
    </location>
</feature>
<feature type="transmembrane region" description="Helical; Name=1" evidence="1">
    <location>
        <begin position="30"/>
        <end position="53"/>
    </location>
</feature>
<feature type="topological domain" description="Cytoplasmic" evidence="1">
    <location>
        <begin position="54"/>
        <end position="66"/>
    </location>
</feature>
<feature type="transmembrane region" description="Helical; Name=2" evidence="1">
    <location>
        <begin position="67"/>
        <end position="87"/>
    </location>
</feature>
<feature type="topological domain" description="Extracellular" evidence="1">
    <location>
        <begin position="88"/>
        <end position="104"/>
    </location>
</feature>
<feature type="transmembrane region" description="Helical; Name=3" evidence="1">
    <location>
        <begin position="105"/>
        <end position="126"/>
    </location>
</feature>
<feature type="topological domain" description="Cytoplasmic" evidence="1">
    <location>
        <begin position="127"/>
        <end position="146"/>
    </location>
</feature>
<feature type="transmembrane region" description="Helical; Name=4" evidence="1">
    <location>
        <begin position="147"/>
        <end position="169"/>
    </location>
</feature>
<feature type="topological domain" description="Extracellular" evidence="1">
    <location>
        <begin position="170"/>
        <end position="191"/>
    </location>
</feature>
<feature type="transmembrane region" description="Helical; Name=5" evidence="1">
    <location>
        <begin position="192"/>
        <end position="214"/>
    </location>
</feature>
<feature type="topological domain" description="Cytoplasmic" evidence="1">
    <location>
        <begin position="215"/>
        <end position="443"/>
    </location>
</feature>
<feature type="transmembrane region" description="Helical; Name=6" evidence="1">
    <location>
        <begin position="444"/>
        <end position="464"/>
    </location>
</feature>
<feature type="topological domain" description="Extracellular" evidence="1">
    <location>
        <begin position="465"/>
        <end position="478"/>
    </location>
</feature>
<feature type="transmembrane region" description="Helical; Name=7" evidence="1">
    <location>
        <begin position="479"/>
        <end position="498"/>
    </location>
</feature>
<feature type="topological domain" description="Cytoplasmic" evidence="1">
    <location>
        <begin position="499"/>
        <end position="532"/>
    </location>
</feature>
<feature type="region of interest" description="Disordered" evidence="4">
    <location>
        <begin position="263"/>
        <end position="294"/>
    </location>
</feature>
<feature type="compositionally biased region" description="Low complexity" evidence="4">
    <location>
        <begin position="270"/>
        <end position="279"/>
    </location>
</feature>
<feature type="compositionally biased region" description="Polar residues" evidence="4">
    <location>
        <begin position="280"/>
        <end position="294"/>
    </location>
</feature>
<feature type="modified residue" description="Phosphothreonine" evidence="2">
    <location>
        <position position="501"/>
    </location>
</feature>
<feature type="modified residue" description="Phosphothreonine" evidence="2">
    <location>
        <position position="505"/>
    </location>
</feature>
<feature type="glycosylation site" description="N-linked (GlcNAc...) asparagine" evidence="2">
    <location>
        <position position="8"/>
    </location>
</feature>